<name>RS15_COXBR</name>
<evidence type="ECO:0000255" key="1">
    <source>
        <dbReference type="HAMAP-Rule" id="MF_01343"/>
    </source>
</evidence>
<evidence type="ECO:0000305" key="2"/>
<feature type="chain" id="PRO_1000086798" description="Small ribosomal subunit protein uS15">
    <location>
        <begin position="1"/>
        <end position="89"/>
    </location>
</feature>
<keyword id="KW-0687">Ribonucleoprotein</keyword>
<keyword id="KW-0689">Ribosomal protein</keyword>
<keyword id="KW-0694">RNA-binding</keyword>
<keyword id="KW-0699">rRNA-binding</keyword>
<gene>
    <name evidence="1" type="primary">rpsO</name>
    <name type="ordered locus">COXBURSA331_A1099</name>
</gene>
<accession>A9ND63</accession>
<organism>
    <name type="scientific">Coxiella burnetii (strain RSA 331 / Henzerling II)</name>
    <dbReference type="NCBI Taxonomy" id="360115"/>
    <lineage>
        <taxon>Bacteria</taxon>
        <taxon>Pseudomonadati</taxon>
        <taxon>Pseudomonadota</taxon>
        <taxon>Gammaproteobacteria</taxon>
        <taxon>Legionellales</taxon>
        <taxon>Coxiellaceae</taxon>
        <taxon>Coxiella</taxon>
    </lineage>
</organism>
<protein>
    <recommendedName>
        <fullName evidence="1">Small ribosomal subunit protein uS15</fullName>
    </recommendedName>
    <alternativeName>
        <fullName evidence="2">30S ribosomal protein S15</fullName>
    </alternativeName>
</protein>
<sequence>MSLASAETAKIVKEYQLGKDDTGSPEVQVAILTAKIIKLTDHMKAHKHDHHSRRGLLRMVSQRRKLLNFLKRNDLQRYLKLIERLGLRS</sequence>
<reference key="1">
    <citation type="submission" date="2007-11" db="EMBL/GenBank/DDBJ databases">
        <title>Genome sequencing of phylogenetically and phenotypically diverse Coxiella burnetii isolates.</title>
        <authorList>
            <person name="Seshadri R."/>
            <person name="Samuel J.E."/>
        </authorList>
    </citation>
    <scope>NUCLEOTIDE SEQUENCE [LARGE SCALE GENOMIC DNA]</scope>
    <source>
        <strain>RSA 331 / Henzerling II</strain>
    </source>
</reference>
<proteinExistence type="inferred from homology"/>
<dbReference type="EMBL" id="CP000890">
    <property type="protein sequence ID" value="ABX77730.1"/>
    <property type="molecule type" value="Genomic_DNA"/>
</dbReference>
<dbReference type="RefSeq" id="WP_005768842.1">
    <property type="nucleotide sequence ID" value="NC_010117.1"/>
</dbReference>
<dbReference type="SMR" id="A9ND63"/>
<dbReference type="KEGG" id="cbs:COXBURSA331_A1099"/>
<dbReference type="HOGENOM" id="CLU_148518_0_0_6"/>
<dbReference type="GO" id="GO:0022627">
    <property type="term" value="C:cytosolic small ribosomal subunit"/>
    <property type="evidence" value="ECO:0007669"/>
    <property type="project" value="TreeGrafter"/>
</dbReference>
<dbReference type="GO" id="GO:0019843">
    <property type="term" value="F:rRNA binding"/>
    <property type="evidence" value="ECO:0007669"/>
    <property type="project" value="UniProtKB-UniRule"/>
</dbReference>
<dbReference type="GO" id="GO:0003735">
    <property type="term" value="F:structural constituent of ribosome"/>
    <property type="evidence" value="ECO:0007669"/>
    <property type="project" value="InterPro"/>
</dbReference>
<dbReference type="GO" id="GO:0006412">
    <property type="term" value="P:translation"/>
    <property type="evidence" value="ECO:0007669"/>
    <property type="project" value="UniProtKB-UniRule"/>
</dbReference>
<dbReference type="CDD" id="cd00353">
    <property type="entry name" value="Ribosomal_S15p_S13e"/>
    <property type="match status" value="1"/>
</dbReference>
<dbReference type="FunFam" id="1.10.287.10:FF:000002">
    <property type="entry name" value="30S ribosomal protein S15"/>
    <property type="match status" value="1"/>
</dbReference>
<dbReference type="Gene3D" id="6.10.250.3130">
    <property type="match status" value="1"/>
</dbReference>
<dbReference type="Gene3D" id="1.10.287.10">
    <property type="entry name" value="S15/NS1, RNA-binding"/>
    <property type="match status" value="1"/>
</dbReference>
<dbReference type="HAMAP" id="MF_01343_B">
    <property type="entry name" value="Ribosomal_uS15_B"/>
    <property type="match status" value="1"/>
</dbReference>
<dbReference type="InterPro" id="IPR000589">
    <property type="entry name" value="Ribosomal_uS15"/>
</dbReference>
<dbReference type="InterPro" id="IPR005290">
    <property type="entry name" value="Ribosomal_uS15_bac-type"/>
</dbReference>
<dbReference type="InterPro" id="IPR009068">
    <property type="entry name" value="uS15_NS1_RNA-bd_sf"/>
</dbReference>
<dbReference type="NCBIfam" id="TIGR00952">
    <property type="entry name" value="S15_bact"/>
    <property type="match status" value="1"/>
</dbReference>
<dbReference type="PANTHER" id="PTHR23321">
    <property type="entry name" value="RIBOSOMAL PROTEIN S15, BACTERIAL AND ORGANELLAR"/>
    <property type="match status" value="1"/>
</dbReference>
<dbReference type="PANTHER" id="PTHR23321:SF26">
    <property type="entry name" value="SMALL RIBOSOMAL SUBUNIT PROTEIN US15M"/>
    <property type="match status" value="1"/>
</dbReference>
<dbReference type="Pfam" id="PF00312">
    <property type="entry name" value="Ribosomal_S15"/>
    <property type="match status" value="1"/>
</dbReference>
<dbReference type="SMART" id="SM01387">
    <property type="entry name" value="Ribosomal_S15"/>
    <property type="match status" value="1"/>
</dbReference>
<dbReference type="SUPFAM" id="SSF47060">
    <property type="entry name" value="S15/NS1 RNA-binding domain"/>
    <property type="match status" value="1"/>
</dbReference>
<dbReference type="PROSITE" id="PS00362">
    <property type="entry name" value="RIBOSOMAL_S15"/>
    <property type="match status" value="1"/>
</dbReference>
<comment type="function">
    <text evidence="1">One of the primary rRNA binding proteins, it binds directly to 16S rRNA where it helps nucleate assembly of the platform of the 30S subunit by binding and bridging several RNA helices of the 16S rRNA.</text>
</comment>
<comment type="function">
    <text evidence="1">Forms an intersubunit bridge (bridge B4) with the 23S rRNA of the 50S subunit in the ribosome.</text>
</comment>
<comment type="subunit">
    <text evidence="1">Part of the 30S ribosomal subunit. Forms a bridge to the 50S subunit in the 70S ribosome, contacting the 23S rRNA.</text>
</comment>
<comment type="similarity">
    <text evidence="1">Belongs to the universal ribosomal protein uS15 family.</text>
</comment>